<protein>
    <recommendedName>
        <fullName>Small hydrophobic protein</fullName>
    </recommendedName>
</protein>
<dbReference type="EMBL" id="D90231">
    <property type="protein sequence ID" value="BAA14279.1"/>
    <property type="molecule type" value="Genomic_RNA"/>
</dbReference>
<dbReference type="EMBL" id="X63705">
    <property type="protein sequence ID" value="CAA45235.1"/>
    <property type="molecule type" value="Genomic_RNA"/>
</dbReference>
<dbReference type="PIR" id="JU0305">
    <property type="entry name" value="SHNZME"/>
</dbReference>
<dbReference type="SMR" id="P22109"/>
<dbReference type="GO" id="GO:0020002">
    <property type="term" value="C:host cell plasma membrane"/>
    <property type="evidence" value="ECO:0007669"/>
    <property type="project" value="UniProtKB-SubCell"/>
</dbReference>
<dbReference type="GO" id="GO:0016020">
    <property type="term" value="C:membrane"/>
    <property type="evidence" value="ECO:0007669"/>
    <property type="project" value="UniProtKB-KW"/>
</dbReference>
<dbReference type="GO" id="GO:0055036">
    <property type="term" value="C:virion membrane"/>
    <property type="evidence" value="ECO:0007669"/>
    <property type="project" value="UniProtKB-SubCell"/>
</dbReference>
<dbReference type="GO" id="GO:0085034">
    <property type="term" value="P:symbiont-mediated suppression of host NF-kappaB cascade"/>
    <property type="evidence" value="ECO:0007669"/>
    <property type="project" value="UniProtKB-KW"/>
</dbReference>
<dbReference type="InterPro" id="IPR001477">
    <property type="entry name" value="SH"/>
</dbReference>
<dbReference type="Pfam" id="PF01445">
    <property type="entry name" value="SH"/>
    <property type="match status" value="1"/>
</dbReference>
<dbReference type="PIRSF" id="PIRSF003923">
    <property type="entry name" value="SH"/>
    <property type="match status" value="1"/>
</dbReference>
<organism>
    <name type="scientific">Mumps virus (strain Enders)</name>
    <name type="common">MuV</name>
    <dbReference type="NCBI Taxonomy" id="11167"/>
    <lineage>
        <taxon>Viruses</taxon>
        <taxon>Riboviria</taxon>
        <taxon>Orthornavirae</taxon>
        <taxon>Negarnaviricota</taxon>
        <taxon>Haploviricotina</taxon>
        <taxon>Monjiviricetes</taxon>
        <taxon>Mononegavirales</taxon>
        <taxon>Paramyxoviridae</taxon>
        <taxon>Rubulavirinae</taxon>
        <taxon>Orthorubulavirus</taxon>
        <taxon>Orthorubulavirus parotitidis</taxon>
        <taxon>Mumps orthorubulavirus</taxon>
    </lineage>
</organism>
<comment type="function">
    <text evidence="2">Plays a role in the inhibition of the host NF-kappa-B pathway. This inhibition occurs at the receptor level, by preventing the signaling of TNFR1 as well as IL-1R and TLR3.</text>
</comment>
<comment type="subunit">
    <text evidence="1 2">Interacts with host TNFRSF1A, RIPK1 and IRAK1; these interactions interfere with host NF-kappa-B activation at the level of receptor complexes (By similarity). Interacts with host protein UBQLN4 (By similarity).</text>
</comment>
<comment type="subcellular location">
    <subcellularLocation>
        <location evidence="2">Virion membrane</location>
        <topology evidence="2">Single-pass membrane protein</topology>
    </subcellularLocation>
    <subcellularLocation>
        <location evidence="2">Host cell membrane</location>
        <topology evidence="2">Single-pass membrane protein</topology>
    </subcellularLocation>
</comment>
<comment type="similarity">
    <text evidence="5">Belongs to the rubulavirus small hydrophobic protein family.</text>
</comment>
<name>SH_MUMPE</name>
<gene>
    <name type="primary">SH</name>
</gene>
<organismHost>
    <name type="scientific">Homo sapiens</name>
    <name type="common">Human</name>
    <dbReference type="NCBI Taxonomy" id="9606"/>
</organismHost>
<keyword id="KW-1032">Host cell membrane</keyword>
<keyword id="KW-1043">Host membrane</keyword>
<keyword id="KW-0945">Host-virus interaction</keyword>
<keyword id="KW-1100">Inhibition of host NF-kappa-B by virus</keyword>
<keyword id="KW-0472">Membrane</keyword>
<keyword id="KW-0812">Transmembrane</keyword>
<keyword id="KW-1133">Transmembrane helix</keyword>
<keyword id="KW-0946">Virion</keyword>
<reference key="1">
    <citation type="submission" date="1990-11" db="EMBL/GenBank/DDBJ databases">
        <authorList>
            <person name="Takeuchi K."/>
        </authorList>
    </citation>
    <scope>NUCLEOTIDE SEQUENCE [GENOMIC RNA]</scope>
</reference>
<reference key="2">
    <citation type="journal article" date="1993" name="Arch. Virol.">
        <title>Identification of a new mumps virus lineage by nucleotide sequence analysis of the SH gene of ten different strains.</title>
        <authorList>
            <person name="Yeo R.P."/>
            <person name="Afzal M.A."/>
            <person name="Forsey T."/>
            <person name="Rima B.K."/>
        </authorList>
    </citation>
    <scope>NUCLEOTIDE SEQUENCE [GENOMIC RNA]</scope>
</reference>
<reference key="3">
    <citation type="journal article" date="1996" name="Virology">
        <title>The mumps virus SH protein is a membrane protein and not essential for virus growth.</title>
        <authorList>
            <person name="Takeuchi K."/>
            <person name="Tanabayashi K."/>
            <person name="Hishiyama M."/>
            <person name="Yamada A."/>
        </authorList>
    </citation>
    <scope>SUBCELLULAR LOCATION</scope>
    <scope>TOPOLOGY</scope>
</reference>
<reference key="4">
    <citation type="journal article" date="2006" name="J. Virol.">
        <title>Function of small hydrophobic proteins of paramyxovirus.</title>
        <authorList>
            <person name="Wilson R.L."/>
            <person name="Fuentes S.M."/>
            <person name="Wang P."/>
            <person name="Taddeo E.C."/>
            <person name="Klatt A."/>
            <person name="Henderson A.J."/>
            <person name="He B."/>
        </authorList>
    </citation>
    <scope>FUNCTION</scope>
</reference>
<feature type="chain" id="PRO_0000142877" description="Small hydrophobic protein">
    <location>
        <begin position="1"/>
        <end position="57"/>
    </location>
</feature>
<feature type="topological domain" description="Virion surface" evidence="3">
    <location>
        <begin position="1"/>
        <end position="8"/>
    </location>
</feature>
<feature type="transmembrane region" description="Helical" evidence="3">
    <location>
        <begin position="9"/>
        <end position="29"/>
    </location>
</feature>
<feature type="topological domain" description="Intravirion" evidence="4">
    <location>
        <begin position="30"/>
        <end position="57"/>
    </location>
</feature>
<sequence length="57" mass="6717">MPAIQPPLYLTFLLLILLYLIITLYVWTILTINHKTAVRYAALYQRSCSRWGFDQSL</sequence>
<accession>P22109</accession>
<proteinExistence type="evidence at protein level"/>
<evidence type="ECO:0000250" key="1">
    <source>
        <dbReference type="UniProtKB" id="P22110"/>
    </source>
</evidence>
<evidence type="ECO:0000250" key="2">
    <source>
        <dbReference type="UniProtKB" id="P22112"/>
    </source>
</evidence>
<evidence type="ECO:0000255" key="3"/>
<evidence type="ECO:0000269" key="4">
    <source>
    </source>
</evidence>
<evidence type="ECO:0000305" key="5"/>